<keyword id="KW-0963">Cytoplasm</keyword>
<keyword id="KW-0227">DNA damage</keyword>
<keyword id="KW-0233">DNA recombination</keyword>
<keyword id="KW-0234">DNA repair</keyword>
<keyword id="KW-0238">DNA-binding</keyword>
<organism>
    <name type="scientific">Serratia proteamaculans (strain 568)</name>
    <dbReference type="NCBI Taxonomy" id="399741"/>
    <lineage>
        <taxon>Bacteria</taxon>
        <taxon>Pseudomonadati</taxon>
        <taxon>Pseudomonadota</taxon>
        <taxon>Gammaproteobacteria</taxon>
        <taxon>Enterobacterales</taxon>
        <taxon>Yersiniaceae</taxon>
        <taxon>Serratia</taxon>
    </lineage>
</organism>
<evidence type="ECO:0000255" key="1">
    <source>
        <dbReference type="HAMAP-Rule" id="MF_00031"/>
    </source>
</evidence>
<feature type="chain" id="PRO_1000057241" description="Holliday junction branch migration complex subunit RuvA">
    <location>
        <begin position="1"/>
        <end position="203"/>
    </location>
</feature>
<feature type="region of interest" description="Domain I" evidence="1">
    <location>
        <begin position="1"/>
        <end position="64"/>
    </location>
</feature>
<feature type="region of interest" description="Domain II" evidence="1">
    <location>
        <begin position="65"/>
        <end position="142"/>
    </location>
</feature>
<feature type="region of interest" description="Flexible linker" evidence="1">
    <location>
        <begin position="143"/>
        <end position="154"/>
    </location>
</feature>
<feature type="region of interest" description="Domain III" evidence="1">
    <location>
        <begin position="155"/>
        <end position="203"/>
    </location>
</feature>
<sequence length="203" mass="22169">MIGRLRGYILEKQPPLVLLEANGVGYEVHMPMTCFYELPELGQEAIVFTQFVVREDAQLLYGFNDKQERALFRELIKVNGVGPKLALAILSGMSAQQFVSAVEREEITSLVKLPGVGKKTAERLVVEMKDRFKGLNGDLFNNSSEITLPTAAQAAELDAEAEAASALVALGYKPQEASRMVSKIAKPGADCETLIRDALRAAL</sequence>
<dbReference type="EMBL" id="CP000826">
    <property type="protein sequence ID" value="ABV41878.1"/>
    <property type="molecule type" value="Genomic_DNA"/>
</dbReference>
<dbReference type="SMR" id="A8GFI8"/>
<dbReference type="STRING" id="399741.Spro_2777"/>
<dbReference type="KEGG" id="spe:Spro_2777"/>
<dbReference type="eggNOG" id="COG0632">
    <property type="taxonomic scope" value="Bacteria"/>
</dbReference>
<dbReference type="HOGENOM" id="CLU_087936_0_0_6"/>
<dbReference type="OrthoDB" id="5293449at2"/>
<dbReference type="GO" id="GO:0005737">
    <property type="term" value="C:cytoplasm"/>
    <property type="evidence" value="ECO:0007669"/>
    <property type="project" value="UniProtKB-SubCell"/>
</dbReference>
<dbReference type="GO" id="GO:0009379">
    <property type="term" value="C:Holliday junction helicase complex"/>
    <property type="evidence" value="ECO:0007669"/>
    <property type="project" value="InterPro"/>
</dbReference>
<dbReference type="GO" id="GO:0048476">
    <property type="term" value="C:Holliday junction resolvase complex"/>
    <property type="evidence" value="ECO:0007669"/>
    <property type="project" value="UniProtKB-UniRule"/>
</dbReference>
<dbReference type="GO" id="GO:0005524">
    <property type="term" value="F:ATP binding"/>
    <property type="evidence" value="ECO:0007669"/>
    <property type="project" value="InterPro"/>
</dbReference>
<dbReference type="GO" id="GO:0000400">
    <property type="term" value="F:four-way junction DNA binding"/>
    <property type="evidence" value="ECO:0007669"/>
    <property type="project" value="UniProtKB-UniRule"/>
</dbReference>
<dbReference type="GO" id="GO:0009378">
    <property type="term" value="F:four-way junction helicase activity"/>
    <property type="evidence" value="ECO:0007669"/>
    <property type="project" value="InterPro"/>
</dbReference>
<dbReference type="GO" id="GO:0006310">
    <property type="term" value="P:DNA recombination"/>
    <property type="evidence" value="ECO:0007669"/>
    <property type="project" value="UniProtKB-UniRule"/>
</dbReference>
<dbReference type="GO" id="GO:0006281">
    <property type="term" value="P:DNA repair"/>
    <property type="evidence" value="ECO:0007669"/>
    <property type="project" value="UniProtKB-UniRule"/>
</dbReference>
<dbReference type="CDD" id="cd14332">
    <property type="entry name" value="UBA_RuvA_C"/>
    <property type="match status" value="1"/>
</dbReference>
<dbReference type="FunFam" id="1.10.150.20:FF:000012">
    <property type="entry name" value="Holliday junction ATP-dependent DNA helicase RuvA"/>
    <property type="match status" value="1"/>
</dbReference>
<dbReference type="FunFam" id="1.10.8.10:FF:000008">
    <property type="entry name" value="Holliday junction ATP-dependent DNA helicase RuvA"/>
    <property type="match status" value="1"/>
</dbReference>
<dbReference type="FunFam" id="2.40.50.140:FF:000083">
    <property type="entry name" value="Holliday junction ATP-dependent DNA helicase RuvA"/>
    <property type="match status" value="1"/>
</dbReference>
<dbReference type="Gene3D" id="1.10.150.20">
    <property type="entry name" value="5' to 3' exonuclease, C-terminal subdomain"/>
    <property type="match status" value="1"/>
</dbReference>
<dbReference type="Gene3D" id="1.10.8.10">
    <property type="entry name" value="DNA helicase RuvA subunit, C-terminal domain"/>
    <property type="match status" value="1"/>
</dbReference>
<dbReference type="Gene3D" id="2.40.50.140">
    <property type="entry name" value="Nucleic acid-binding proteins"/>
    <property type="match status" value="1"/>
</dbReference>
<dbReference type="HAMAP" id="MF_00031">
    <property type="entry name" value="DNA_HJ_migration_RuvA"/>
    <property type="match status" value="1"/>
</dbReference>
<dbReference type="InterPro" id="IPR013849">
    <property type="entry name" value="DNA_helicase_Holl-junc_RuvA_I"/>
</dbReference>
<dbReference type="InterPro" id="IPR003583">
    <property type="entry name" value="Hlx-hairpin-Hlx_DNA-bd_motif"/>
</dbReference>
<dbReference type="InterPro" id="IPR012340">
    <property type="entry name" value="NA-bd_OB-fold"/>
</dbReference>
<dbReference type="InterPro" id="IPR000085">
    <property type="entry name" value="RuvA"/>
</dbReference>
<dbReference type="InterPro" id="IPR010994">
    <property type="entry name" value="RuvA_2-like"/>
</dbReference>
<dbReference type="InterPro" id="IPR011114">
    <property type="entry name" value="RuvA_C"/>
</dbReference>
<dbReference type="InterPro" id="IPR036267">
    <property type="entry name" value="RuvA_C_sf"/>
</dbReference>
<dbReference type="NCBIfam" id="TIGR00084">
    <property type="entry name" value="ruvA"/>
    <property type="match status" value="1"/>
</dbReference>
<dbReference type="Pfam" id="PF14520">
    <property type="entry name" value="HHH_5"/>
    <property type="match status" value="1"/>
</dbReference>
<dbReference type="Pfam" id="PF07499">
    <property type="entry name" value="RuvA_C"/>
    <property type="match status" value="1"/>
</dbReference>
<dbReference type="Pfam" id="PF01330">
    <property type="entry name" value="RuvA_N"/>
    <property type="match status" value="1"/>
</dbReference>
<dbReference type="SMART" id="SM00278">
    <property type="entry name" value="HhH1"/>
    <property type="match status" value="2"/>
</dbReference>
<dbReference type="SUPFAM" id="SSF46929">
    <property type="entry name" value="DNA helicase RuvA subunit, C-terminal domain"/>
    <property type="match status" value="1"/>
</dbReference>
<dbReference type="SUPFAM" id="SSF50249">
    <property type="entry name" value="Nucleic acid-binding proteins"/>
    <property type="match status" value="1"/>
</dbReference>
<dbReference type="SUPFAM" id="SSF47781">
    <property type="entry name" value="RuvA domain 2-like"/>
    <property type="match status" value="1"/>
</dbReference>
<comment type="function">
    <text evidence="1">The RuvA-RuvB-RuvC complex processes Holliday junction (HJ) DNA during genetic recombination and DNA repair, while the RuvA-RuvB complex plays an important role in the rescue of blocked DNA replication forks via replication fork reversal (RFR). RuvA specifically binds to HJ cruciform DNA, conferring on it an open structure. The RuvB hexamer acts as an ATP-dependent pump, pulling dsDNA into and through the RuvAB complex. HJ branch migration allows RuvC to scan DNA until it finds its consensus sequence, where it cleaves and resolves the cruciform DNA.</text>
</comment>
<comment type="subunit">
    <text evidence="1">Homotetramer. Forms an RuvA(8)-RuvB(12)-Holliday junction (HJ) complex. HJ DNA is sandwiched between 2 RuvA tetramers; dsDNA enters through RuvA and exits via RuvB. An RuvB hexamer assembles on each DNA strand where it exits the tetramer. Each RuvB hexamer is contacted by two RuvA subunits (via domain III) on 2 adjacent RuvB subunits; this complex drives branch migration. In the full resolvosome a probable DNA-RuvA(4)-RuvB(12)-RuvC(2) complex forms which resolves the HJ.</text>
</comment>
<comment type="subcellular location">
    <subcellularLocation>
        <location evidence="1">Cytoplasm</location>
    </subcellularLocation>
</comment>
<comment type="domain">
    <text evidence="1">Has three domains with a flexible linker between the domains II and III and assumes an 'L' shape. Domain III is highly mobile and contacts RuvB.</text>
</comment>
<comment type="similarity">
    <text evidence="1">Belongs to the RuvA family.</text>
</comment>
<protein>
    <recommendedName>
        <fullName evidence="1">Holliday junction branch migration complex subunit RuvA</fullName>
    </recommendedName>
</protein>
<reference key="1">
    <citation type="submission" date="2007-09" db="EMBL/GenBank/DDBJ databases">
        <title>Complete sequence of chromosome of Serratia proteamaculans 568.</title>
        <authorList>
            <consortium name="US DOE Joint Genome Institute"/>
            <person name="Copeland A."/>
            <person name="Lucas S."/>
            <person name="Lapidus A."/>
            <person name="Barry K."/>
            <person name="Glavina del Rio T."/>
            <person name="Dalin E."/>
            <person name="Tice H."/>
            <person name="Pitluck S."/>
            <person name="Chain P."/>
            <person name="Malfatti S."/>
            <person name="Shin M."/>
            <person name="Vergez L."/>
            <person name="Schmutz J."/>
            <person name="Larimer F."/>
            <person name="Land M."/>
            <person name="Hauser L."/>
            <person name="Kyrpides N."/>
            <person name="Kim E."/>
            <person name="Taghavi S."/>
            <person name="Newman L."/>
            <person name="Vangronsveld J."/>
            <person name="van der Lelie D."/>
            <person name="Richardson P."/>
        </authorList>
    </citation>
    <scope>NUCLEOTIDE SEQUENCE [LARGE SCALE GENOMIC DNA]</scope>
    <source>
        <strain>568</strain>
    </source>
</reference>
<name>RUVA_SERP5</name>
<gene>
    <name evidence="1" type="primary">ruvA</name>
    <name type="ordered locus">Spro_2777</name>
</gene>
<proteinExistence type="inferred from homology"/>
<accession>A8GFI8</accession>